<gene>
    <name evidence="1" type="primary">leuS</name>
    <name type="ordered locus">b0642</name>
    <name type="ordered locus">JW0637</name>
</gene>
<accession>P07813</accession>
<accession>P77110</accession>
<accession>P78292</accession>
<evidence type="ECO:0000255" key="1">
    <source>
        <dbReference type="HAMAP-Rule" id="MF_00049"/>
    </source>
</evidence>
<evidence type="ECO:0000305" key="2"/>
<evidence type="ECO:0007829" key="3">
    <source>
        <dbReference type="PDB" id="2AJG"/>
    </source>
</evidence>
<evidence type="ECO:0007829" key="4">
    <source>
        <dbReference type="PDB" id="3ZGZ"/>
    </source>
</evidence>
<evidence type="ECO:0007829" key="5">
    <source>
        <dbReference type="PDB" id="3ZJT"/>
    </source>
</evidence>
<evidence type="ECO:0007829" key="6">
    <source>
        <dbReference type="PDB" id="3ZJU"/>
    </source>
</evidence>
<evidence type="ECO:0007829" key="7">
    <source>
        <dbReference type="PDB" id="4AQ7"/>
    </source>
</evidence>
<evidence type="ECO:0007829" key="8">
    <source>
        <dbReference type="PDB" id="4ARC"/>
    </source>
</evidence>
<evidence type="ECO:0007829" key="9">
    <source>
        <dbReference type="PDB" id="4AS1"/>
    </source>
</evidence>
<evidence type="ECO:0007829" key="10">
    <source>
        <dbReference type="PDB" id="4CQN"/>
    </source>
</evidence>
<keyword id="KW-0002">3D-structure</keyword>
<keyword id="KW-0030">Aminoacyl-tRNA synthetase</keyword>
<keyword id="KW-0067">ATP-binding</keyword>
<keyword id="KW-0963">Cytoplasm</keyword>
<keyword id="KW-0436">Ligase</keyword>
<keyword id="KW-0547">Nucleotide-binding</keyword>
<keyword id="KW-0648">Protein biosynthesis</keyword>
<keyword id="KW-1185">Reference proteome</keyword>
<proteinExistence type="evidence at protein level"/>
<organism>
    <name type="scientific">Escherichia coli (strain K12)</name>
    <dbReference type="NCBI Taxonomy" id="83333"/>
    <lineage>
        <taxon>Bacteria</taxon>
        <taxon>Pseudomonadati</taxon>
        <taxon>Pseudomonadota</taxon>
        <taxon>Gammaproteobacteria</taxon>
        <taxon>Enterobacterales</taxon>
        <taxon>Enterobacteriaceae</taxon>
        <taxon>Escherichia</taxon>
    </lineage>
</organism>
<name>SYL_ECOLI</name>
<sequence length="860" mass="97234">MQEQYRPEEIESKVQLHWDEKRTFEVTEDESKEKYYCLSMLPYPSGRLHMGHVRNYTIGDVIARYQRMLGKNVLQPIGWDAFGLPAEGAAVKNNTAPAPWTYDNIAYMKNQLKMLGFGYDWSRELATCTPEYYRWEQKFFTELYKKGLVYKKTSAVNWCPNDQTVLANEQVIDGCCWRCDTKVERKEIPQWFIKITAYADELLNDLDKLDHWPDTVKTMQRNWIGRSEGVEITFNVNDYDNTLTVYTTRPDTFMGCTYLAVAAGHPLAQKAAENNPELAAFIDECRNTKVAEAEMATMEKKGVDTGFKAVHPLTGEEIPVWAANFVLMEYGTGAVMAVPGHDQRDYEFASKYGLNIKPVILAADGSEPDLSQQALTEKGVLFNSGEFNGLDHEAAFNAIADKLTAMGVGERKVNYRLRDWGVSRQRYWGAPIPMVTLEDGTVMPTPDDQLPVILPEDVVMDGITSPIKADPEWAKTTVNGMPALRETDTFDTFMESSWYYARYTCPQYKEGMLDSEAANYWLPVDIYIGGIEHAIMHLLYFRFFHKLMRDAGMVNSDEPAKQLLCQGMVLADAFYYVGENGERNWVSPVDAIVERDEKGRIVKAKDAAGHELVYTGMSKMSKSKNNGIDPQVMVERYGADTVRLFMMFASPADMTLEWQESGVEGANRFLKRVWKLVYEHTAKGDVAALNVDALTENQKALRRDVHKTIAKVTDDIGRRQTFNTAIAAIMELMNKLAKAPTDGEQDRALMQEALLAVVRMLNPFTPHICFTLWQELKGEGDIDNAPWPVADEKAMVEDSTLVVVQVNGKVRAKITVPVDATEEQVRERAGQEHLVAKYLDGVTVRKVIYVPGKLLNLVVG</sequence>
<feature type="chain" id="PRO_0000152012" description="Leucine--tRNA ligase">
    <location>
        <begin position="1"/>
        <end position="860"/>
    </location>
</feature>
<feature type="short sequence motif" description="'HIGH' region">
    <location>
        <begin position="42"/>
        <end position="52"/>
    </location>
</feature>
<feature type="short sequence motif" description="'KMSKS' region">
    <location>
        <begin position="619"/>
        <end position="623"/>
    </location>
</feature>
<feature type="binding site" evidence="1">
    <location>
        <position position="622"/>
    </location>
    <ligand>
        <name>ATP</name>
        <dbReference type="ChEBI" id="CHEBI:30616"/>
    </ligand>
</feature>
<feature type="sequence conflict" description="In Ref. 1; CAA29642." evidence="2" ref="1">
    <original>R</original>
    <variation>H</variation>
    <location>
        <position position="67"/>
    </location>
</feature>
<feature type="sequence conflict" description="In Ref. 1; CAA29642." evidence="2" ref="1">
    <original>T</original>
    <variation>N</variation>
    <location>
        <position position="196"/>
    </location>
</feature>
<feature type="sequence conflict" description="In Ref. 1 and 3." evidence="2" ref="1 3">
    <original>A</original>
    <variation>R</variation>
    <location>
        <position position="262"/>
    </location>
</feature>
<feature type="helix" evidence="8">
    <location>
        <begin position="7"/>
        <end position="20"/>
    </location>
</feature>
<feature type="turn" evidence="8">
    <location>
        <begin position="21"/>
        <end position="24"/>
    </location>
</feature>
<feature type="strand" evidence="10">
    <location>
        <begin position="30"/>
        <end position="32"/>
    </location>
</feature>
<feature type="strand" evidence="8">
    <location>
        <begin position="34"/>
        <end position="39"/>
    </location>
</feature>
<feature type="strand" evidence="5">
    <location>
        <begin position="45"/>
        <end position="47"/>
    </location>
</feature>
<feature type="helix" evidence="8">
    <location>
        <begin position="50"/>
        <end position="68"/>
    </location>
</feature>
<feature type="strand" evidence="8">
    <location>
        <begin position="72"/>
        <end position="74"/>
    </location>
</feature>
<feature type="strand" evidence="7">
    <location>
        <begin position="76"/>
        <end position="79"/>
    </location>
</feature>
<feature type="helix" evidence="8">
    <location>
        <begin position="85"/>
        <end position="92"/>
    </location>
</feature>
<feature type="strand" evidence="6">
    <location>
        <begin position="93"/>
        <end position="95"/>
    </location>
</feature>
<feature type="helix" evidence="8">
    <location>
        <begin position="97"/>
        <end position="114"/>
    </location>
</feature>
<feature type="helix" evidence="8">
    <location>
        <begin position="121"/>
        <end position="123"/>
    </location>
</feature>
<feature type="helix" evidence="8">
    <location>
        <begin position="130"/>
        <end position="145"/>
    </location>
</feature>
<feature type="strand" evidence="8">
    <location>
        <begin position="149"/>
        <end position="154"/>
    </location>
</feature>
<feature type="turn" evidence="4">
    <location>
        <begin position="160"/>
        <end position="163"/>
    </location>
</feature>
<feature type="strand" evidence="4">
    <location>
        <begin position="164"/>
        <end position="166"/>
    </location>
</feature>
<feature type="helix" evidence="4">
    <location>
        <begin position="168"/>
        <end position="170"/>
    </location>
</feature>
<feature type="strand" evidence="4">
    <location>
        <begin position="177"/>
        <end position="179"/>
    </location>
</feature>
<feature type="strand" evidence="8">
    <location>
        <begin position="188"/>
        <end position="193"/>
    </location>
</feature>
<feature type="helix" evidence="8">
    <location>
        <begin position="195"/>
        <end position="198"/>
    </location>
</feature>
<feature type="helix" evidence="8">
    <location>
        <begin position="199"/>
        <end position="205"/>
    </location>
</feature>
<feature type="helix" evidence="8">
    <location>
        <begin position="206"/>
        <end position="208"/>
    </location>
</feature>
<feature type="helix" evidence="8">
    <location>
        <begin position="214"/>
        <end position="224"/>
    </location>
</feature>
<feature type="strand" evidence="3">
    <location>
        <begin position="229"/>
        <end position="236"/>
    </location>
</feature>
<feature type="strand" evidence="3">
    <location>
        <begin position="240"/>
        <end position="248"/>
    </location>
</feature>
<feature type="helix" evidence="3">
    <location>
        <begin position="250"/>
        <end position="255"/>
    </location>
</feature>
<feature type="strand" evidence="3">
    <location>
        <begin position="258"/>
        <end position="261"/>
    </location>
</feature>
<feature type="helix" evidence="3">
    <location>
        <begin position="266"/>
        <end position="272"/>
    </location>
</feature>
<feature type="helix" evidence="3">
    <location>
        <begin position="276"/>
        <end position="287"/>
    </location>
</feature>
<feature type="helix" evidence="3">
    <location>
        <begin position="292"/>
        <end position="297"/>
    </location>
</feature>
<feature type="strand" evidence="3">
    <location>
        <begin position="302"/>
        <end position="310"/>
    </location>
</feature>
<feature type="turn" evidence="3">
    <location>
        <begin position="312"/>
        <end position="314"/>
    </location>
</feature>
<feature type="strand" evidence="3">
    <location>
        <begin position="317"/>
        <end position="323"/>
    </location>
</feature>
<feature type="strand" evidence="3">
    <location>
        <begin position="328"/>
        <end position="331"/>
    </location>
</feature>
<feature type="strand" evidence="3">
    <location>
        <begin position="333"/>
        <end position="337"/>
    </location>
</feature>
<feature type="turn" evidence="3">
    <location>
        <begin position="339"/>
        <end position="341"/>
    </location>
</feature>
<feature type="helix" evidence="3">
    <location>
        <begin position="343"/>
        <end position="352"/>
    </location>
</feature>
<feature type="strand" evidence="3">
    <location>
        <begin position="371"/>
        <end position="373"/>
    </location>
</feature>
<feature type="helix" evidence="3">
    <location>
        <begin position="385"/>
        <end position="387"/>
    </location>
</feature>
<feature type="helix" evidence="3">
    <location>
        <begin position="392"/>
        <end position="405"/>
    </location>
</feature>
<feature type="strand" evidence="3">
    <location>
        <begin position="408"/>
        <end position="412"/>
    </location>
</feature>
<feature type="strand" evidence="8">
    <location>
        <begin position="423"/>
        <end position="425"/>
    </location>
</feature>
<feature type="strand" evidence="8">
    <location>
        <begin position="427"/>
        <end position="429"/>
    </location>
</feature>
<feature type="strand" evidence="8">
    <location>
        <begin position="434"/>
        <end position="437"/>
    </location>
</feature>
<feature type="strand" evidence="8">
    <location>
        <begin position="442"/>
        <end position="444"/>
    </location>
</feature>
<feature type="helix" evidence="8">
    <location>
        <begin position="447"/>
        <end position="449"/>
    </location>
</feature>
<feature type="strand" evidence="8">
    <location>
        <begin position="462"/>
        <end position="464"/>
    </location>
</feature>
<feature type="helix" evidence="8">
    <location>
        <begin position="466"/>
        <end position="469"/>
    </location>
</feature>
<feature type="turn" evidence="8">
    <location>
        <begin position="471"/>
        <end position="474"/>
    </location>
</feature>
<feature type="strand" evidence="8">
    <location>
        <begin position="475"/>
        <end position="485"/>
    </location>
</feature>
<feature type="turn" evidence="8">
    <location>
        <begin position="492"/>
        <end position="494"/>
    </location>
</feature>
<feature type="helix" evidence="8">
    <location>
        <begin position="495"/>
        <end position="497"/>
    </location>
</feature>
<feature type="helix" evidence="8">
    <location>
        <begin position="499"/>
        <end position="502"/>
    </location>
</feature>
<feature type="strand" evidence="8">
    <location>
        <begin position="510"/>
        <end position="512"/>
    </location>
</feature>
<feature type="helix" evidence="8">
    <location>
        <begin position="515"/>
        <end position="521"/>
    </location>
</feature>
<feature type="strand" evidence="8">
    <location>
        <begin position="523"/>
        <end position="528"/>
    </location>
</feature>
<feature type="helix" evidence="8">
    <location>
        <begin position="531"/>
        <end position="533"/>
    </location>
</feature>
<feature type="turn" evidence="8">
    <location>
        <begin position="534"/>
        <end position="536"/>
    </location>
</feature>
<feature type="helix" evidence="8">
    <location>
        <begin position="537"/>
        <end position="550"/>
    </location>
</feature>
<feature type="strand" evidence="8">
    <location>
        <begin position="559"/>
        <end position="564"/>
    </location>
</feature>
<feature type="strand" evidence="8">
    <location>
        <begin position="569"/>
        <end position="577"/>
    </location>
</feature>
<feature type="strand" evidence="10">
    <location>
        <begin position="579"/>
        <end position="581"/>
    </location>
</feature>
<feature type="strand" evidence="8">
    <location>
        <begin position="583"/>
        <end position="586"/>
    </location>
</feature>
<feature type="helix" evidence="9">
    <location>
        <begin position="588"/>
        <end position="590"/>
    </location>
</feature>
<feature type="strand" evidence="8">
    <location>
        <begin position="592"/>
        <end position="595"/>
    </location>
</feature>
<feature type="strand" evidence="7">
    <location>
        <begin position="597"/>
        <end position="599"/>
    </location>
</feature>
<feature type="strand" evidence="8">
    <location>
        <begin position="601"/>
        <end position="605"/>
    </location>
</feature>
<feature type="strand" evidence="8">
    <location>
        <begin position="613"/>
        <end position="619"/>
    </location>
</feature>
<feature type="turn" evidence="8">
    <location>
        <begin position="622"/>
        <end position="625"/>
    </location>
</feature>
<feature type="helix" evidence="8">
    <location>
        <begin position="630"/>
        <end position="637"/>
    </location>
</feature>
<feature type="helix" evidence="8">
    <location>
        <begin position="639"/>
        <end position="648"/>
    </location>
</feature>
<feature type="helix" evidence="8">
    <location>
        <begin position="660"/>
        <end position="682"/>
    </location>
</feature>
<feature type="helix" evidence="9">
    <location>
        <begin position="691"/>
        <end position="693"/>
    </location>
</feature>
<feature type="helix" evidence="8">
    <location>
        <begin position="696"/>
        <end position="717"/>
    </location>
</feature>
<feature type="helix" evidence="8">
    <location>
        <begin position="722"/>
        <end position="737"/>
    </location>
</feature>
<feature type="helix" evidence="8">
    <location>
        <begin position="744"/>
        <end position="761"/>
    </location>
</feature>
<feature type="turn" evidence="8">
    <location>
        <begin position="762"/>
        <end position="764"/>
    </location>
</feature>
<feature type="helix" evidence="8">
    <location>
        <begin position="766"/>
        <end position="775"/>
    </location>
</feature>
<feature type="helix" evidence="8">
    <location>
        <begin position="782"/>
        <end position="784"/>
    </location>
</feature>
<feature type="helix" evidence="8">
    <location>
        <begin position="792"/>
        <end position="795"/>
    </location>
</feature>
<feature type="strand" evidence="8">
    <location>
        <begin position="798"/>
        <end position="806"/>
    </location>
</feature>
<feature type="strand" evidence="8">
    <location>
        <begin position="809"/>
        <end position="817"/>
    </location>
</feature>
<feature type="helix" evidence="8">
    <location>
        <begin position="822"/>
        <end position="831"/>
    </location>
</feature>
<feature type="helix" evidence="8">
    <location>
        <begin position="833"/>
        <end position="836"/>
    </location>
</feature>
<feature type="turn" evidence="8">
    <location>
        <begin position="837"/>
        <end position="841"/>
    </location>
</feature>
<feature type="strand" evidence="8">
    <location>
        <begin position="846"/>
        <end position="850"/>
    </location>
</feature>
<feature type="turn" evidence="8">
    <location>
        <begin position="851"/>
        <end position="853"/>
    </location>
</feature>
<feature type="strand" evidence="8">
    <location>
        <begin position="854"/>
        <end position="858"/>
    </location>
</feature>
<dbReference type="EC" id="6.1.1.4" evidence="1"/>
<dbReference type="EMBL" id="X06331">
    <property type="protein sequence ID" value="CAA29642.1"/>
    <property type="molecule type" value="Genomic_DNA"/>
</dbReference>
<dbReference type="EMBL" id="U82598">
    <property type="protein sequence ID" value="AAB40843.1"/>
    <property type="status" value="ALT_INIT"/>
    <property type="molecule type" value="Genomic_DNA"/>
</dbReference>
<dbReference type="EMBL" id="U00096">
    <property type="protein sequence ID" value="AAC73743.1"/>
    <property type="molecule type" value="Genomic_DNA"/>
</dbReference>
<dbReference type="EMBL" id="AP009048">
    <property type="protein sequence ID" value="BAA35289.1"/>
    <property type="molecule type" value="Genomic_DNA"/>
</dbReference>
<dbReference type="PIR" id="H64798">
    <property type="entry name" value="SYECL"/>
</dbReference>
<dbReference type="RefSeq" id="NP_415175.1">
    <property type="nucleotide sequence ID" value="NC_000913.3"/>
</dbReference>
<dbReference type="RefSeq" id="WP_001340834.1">
    <property type="nucleotide sequence ID" value="NZ_SSZK01000037.1"/>
</dbReference>
<dbReference type="PDB" id="2AJG">
    <property type="method" value="X-ray"/>
    <property type="resolution" value="2.00 A"/>
    <property type="chains" value="A/B=228-413"/>
</dbReference>
<dbReference type="PDB" id="2AJH">
    <property type="method" value="X-ray"/>
    <property type="resolution" value="2.40 A"/>
    <property type="chains" value="A/B=228-413"/>
</dbReference>
<dbReference type="PDB" id="2AJI">
    <property type="method" value="X-ray"/>
    <property type="resolution" value="3.20 A"/>
    <property type="chains" value="A/B=228-413"/>
</dbReference>
<dbReference type="PDB" id="3ZGZ">
    <property type="method" value="X-ray"/>
    <property type="resolution" value="2.40 A"/>
    <property type="chains" value="A/D=1-860"/>
</dbReference>
<dbReference type="PDB" id="3ZJT">
    <property type="method" value="X-ray"/>
    <property type="resolution" value="2.20 A"/>
    <property type="chains" value="A=1-860"/>
</dbReference>
<dbReference type="PDB" id="3ZJU">
    <property type="method" value="X-ray"/>
    <property type="resolution" value="2.40 A"/>
    <property type="chains" value="A=1-860"/>
</dbReference>
<dbReference type="PDB" id="3ZJV">
    <property type="method" value="X-ray"/>
    <property type="resolution" value="2.31 A"/>
    <property type="chains" value="A=1-860"/>
</dbReference>
<dbReference type="PDB" id="4AQ7">
    <property type="method" value="X-ray"/>
    <property type="resolution" value="2.50 A"/>
    <property type="chains" value="A/D=1-860"/>
</dbReference>
<dbReference type="PDB" id="4ARC">
    <property type="method" value="X-ray"/>
    <property type="resolution" value="2.00 A"/>
    <property type="chains" value="A=1-860"/>
</dbReference>
<dbReference type="PDB" id="4ARI">
    <property type="method" value="X-ray"/>
    <property type="resolution" value="2.08 A"/>
    <property type="chains" value="A=1-860"/>
</dbReference>
<dbReference type="PDB" id="4AS1">
    <property type="method" value="X-ray"/>
    <property type="resolution" value="2.02 A"/>
    <property type="chains" value="A=1-860"/>
</dbReference>
<dbReference type="PDB" id="4CQN">
    <property type="method" value="X-ray"/>
    <property type="resolution" value="2.50 A"/>
    <property type="chains" value="A/D=1-860"/>
</dbReference>
<dbReference type="PDB" id="5OMW">
    <property type="method" value="X-ray"/>
    <property type="resolution" value="2.60 A"/>
    <property type="chains" value="A/D=1-860"/>
</dbReference>
<dbReference type="PDB" id="5ON2">
    <property type="method" value="X-ray"/>
    <property type="resolution" value="3.10 A"/>
    <property type="chains" value="A/D=1-860"/>
</dbReference>
<dbReference type="PDB" id="5ON3">
    <property type="method" value="X-ray"/>
    <property type="resolution" value="3.10 A"/>
    <property type="chains" value="A/D=1-860"/>
</dbReference>
<dbReference type="PDB" id="5ONH">
    <property type="method" value="X-ray"/>
    <property type="resolution" value="3.10 A"/>
    <property type="chains" value="A/D=1-860"/>
</dbReference>
<dbReference type="PDB" id="8POT">
    <property type="method" value="X-ray"/>
    <property type="resolution" value="2.15 A"/>
    <property type="chains" value="A=1-860"/>
</dbReference>
<dbReference type="PDBsum" id="2AJG"/>
<dbReference type="PDBsum" id="2AJH"/>
<dbReference type="PDBsum" id="2AJI"/>
<dbReference type="PDBsum" id="3ZGZ"/>
<dbReference type="PDBsum" id="3ZJT"/>
<dbReference type="PDBsum" id="3ZJU"/>
<dbReference type="PDBsum" id="3ZJV"/>
<dbReference type="PDBsum" id="4AQ7"/>
<dbReference type="PDBsum" id="4ARC"/>
<dbReference type="PDBsum" id="4ARI"/>
<dbReference type="PDBsum" id="4AS1"/>
<dbReference type="PDBsum" id="4CQN"/>
<dbReference type="PDBsum" id="5OMW"/>
<dbReference type="PDBsum" id="5ON2"/>
<dbReference type="PDBsum" id="5ON3"/>
<dbReference type="PDBsum" id="5ONH"/>
<dbReference type="PDBsum" id="8POT"/>
<dbReference type="SMR" id="P07813"/>
<dbReference type="BioGRID" id="4263356">
    <property type="interactions" value="63"/>
</dbReference>
<dbReference type="BioGRID" id="851814">
    <property type="interactions" value="7"/>
</dbReference>
<dbReference type="DIP" id="DIP-10095N"/>
<dbReference type="FunCoup" id="P07813">
    <property type="interactions" value="872"/>
</dbReference>
<dbReference type="IntAct" id="P07813">
    <property type="interactions" value="21"/>
</dbReference>
<dbReference type="STRING" id="511145.b0642"/>
<dbReference type="BindingDB" id="P07813"/>
<dbReference type="ChEMBL" id="CHEMBL4295566"/>
<dbReference type="ChEMBL" id="CHEMBL4662935"/>
<dbReference type="CarbonylDB" id="P07813"/>
<dbReference type="jPOST" id="P07813"/>
<dbReference type="PaxDb" id="511145-b0642"/>
<dbReference type="EnsemblBacteria" id="AAC73743">
    <property type="protein sequence ID" value="AAC73743"/>
    <property type="gene ID" value="b0642"/>
</dbReference>
<dbReference type="GeneID" id="947497"/>
<dbReference type="KEGG" id="ecj:JW0637"/>
<dbReference type="KEGG" id="eco:b0642"/>
<dbReference type="KEGG" id="ecoc:C3026_03210"/>
<dbReference type="PATRIC" id="fig|1411691.4.peg.1626"/>
<dbReference type="EchoBASE" id="EB0527"/>
<dbReference type="eggNOG" id="COG0495">
    <property type="taxonomic scope" value="Bacteria"/>
</dbReference>
<dbReference type="HOGENOM" id="CLU_004427_0_0_6"/>
<dbReference type="InParanoid" id="P07813"/>
<dbReference type="OMA" id="GIEHACM"/>
<dbReference type="OrthoDB" id="9810365at2"/>
<dbReference type="PhylomeDB" id="P07813"/>
<dbReference type="BioCyc" id="EcoCyc:LEUS-MONOMER"/>
<dbReference type="BioCyc" id="MetaCyc:LEUS-MONOMER"/>
<dbReference type="BRENDA" id="6.1.1.4">
    <property type="organism ID" value="2026"/>
</dbReference>
<dbReference type="SABIO-RK" id="P07813"/>
<dbReference type="EvolutionaryTrace" id="P07813"/>
<dbReference type="PRO" id="PR:P07813"/>
<dbReference type="Proteomes" id="UP000000625">
    <property type="component" value="Chromosome"/>
</dbReference>
<dbReference type="GO" id="GO:0005829">
    <property type="term" value="C:cytosol"/>
    <property type="evidence" value="ECO:0000314"/>
    <property type="project" value="EcoCyc"/>
</dbReference>
<dbReference type="GO" id="GO:0002161">
    <property type="term" value="F:aminoacyl-tRNA deacylase activity"/>
    <property type="evidence" value="ECO:0007669"/>
    <property type="project" value="InterPro"/>
</dbReference>
<dbReference type="GO" id="GO:0005524">
    <property type="term" value="F:ATP binding"/>
    <property type="evidence" value="ECO:0007669"/>
    <property type="project" value="UniProtKB-UniRule"/>
</dbReference>
<dbReference type="GO" id="GO:0004823">
    <property type="term" value="F:leucine-tRNA ligase activity"/>
    <property type="evidence" value="ECO:0000314"/>
    <property type="project" value="EcoCyc"/>
</dbReference>
<dbReference type="GO" id="GO:0006429">
    <property type="term" value="P:leucyl-tRNA aminoacylation"/>
    <property type="evidence" value="ECO:0000314"/>
    <property type="project" value="EcoCyc"/>
</dbReference>
<dbReference type="CDD" id="cd07958">
    <property type="entry name" value="Anticodon_Ia_Leu_BEm"/>
    <property type="match status" value="1"/>
</dbReference>
<dbReference type="CDD" id="cd00812">
    <property type="entry name" value="LeuRS_core"/>
    <property type="match status" value="1"/>
</dbReference>
<dbReference type="FunFam" id="1.10.730.10:FF:000002">
    <property type="entry name" value="Leucine--tRNA ligase"/>
    <property type="match status" value="2"/>
</dbReference>
<dbReference type="FunFam" id="2.20.28.290:FF:000001">
    <property type="entry name" value="Leucine--tRNA ligase"/>
    <property type="match status" value="1"/>
</dbReference>
<dbReference type="FunFam" id="3.10.20.590:FF:000001">
    <property type="entry name" value="Leucine--tRNA ligase"/>
    <property type="match status" value="1"/>
</dbReference>
<dbReference type="FunFam" id="3.40.50.620:FF:000003">
    <property type="entry name" value="Leucine--tRNA ligase"/>
    <property type="match status" value="1"/>
</dbReference>
<dbReference type="FunFam" id="3.40.50.620:FF:000124">
    <property type="entry name" value="Leucine--tRNA ligase"/>
    <property type="match status" value="1"/>
</dbReference>
<dbReference type="FunFam" id="3.90.740.10:FF:000012">
    <property type="entry name" value="Leucine--tRNA ligase"/>
    <property type="match status" value="1"/>
</dbReference>
<dbReference type="Gene3D" id="2.20.28.290">
    <property type="match status" value="1"/>
</dbReference>
<dbReference type="Gene3D" id="3.10.20.590">
    <property type="match status" value="1"/>
</dbReference>
<dbReference type="Gene3D" id="3.40.50.620">
    <property type="entry name" value="HUPs"/>
    <property type="match status" value="2"/>
</dbReference>
<dbReference type="Gene3D" id="1.10.730.10">
    <property type="entry name" value="Isoleucyl-tRNA Synthetase, Domain 1"/>
    <property type="match status" value="2"/>
</dbReference>
<dbReference type="HAMAP" id="MF_00049_B">
    <property type="entry name" value="Leu_tRNA_synth_B"/>
    <property type="match status" value="1"/>
</dbReference>
<dbReference type="InterPro" id="IPR001412">
    <property type="entry name" value="aa-tRNA-synth_I_CS"/>
</dbReference>
<dbReference type="InterPro" id="IPR002300">
    <property type="entry name" value="aa-tRNA-synth_Ia"/>
</dbReference>
<dbReference type="InterPro" id="IPR002302">
    <property type="entry name" value="Leu-tRNA-ligase"/>
</dbReference>
<dbReference type="InterPro" id="IPR025709">
    <property type="entry name" value="Leu_tRNA-synth_edit"/>
</dbReference>
<dbReference type="InterPro" id="IPR013155">
    <property type="entry name" value="M/V/L/I-tRNA-synth_anticd-bd"/>
</dbReference>
<dbReference type="InterPro" id="IPR015413">
    <property type="entry name" value="Methionyl/Leucyl_tRNA_Synth"/>
</dbReference>
<dbReference type="InterPro" id="IPR014729">
    <property type="entry name" value="Rossmann-like_a/b/a_fold"/>
</dbReference>
<dbReference type="InterPro" id="IPR009080">
    <property type="entry name" value="tRNAsynth_Ia_anticodon-bd"/>
</dbReference>
<dbReference type="InterPro" id="IPR009008">
    <property type="entry name" value="Val/Leu/Ile-tRNA-synth_edit"/>
</dbReference>
<dbReference type="NCBIfam" id="TIGR00396">
    <property type="entry name" value="leuS_bact"/>
    <property type="match status" value="1"/>
</dbReference>
<dbReference type="PANTHER" id="PTHR43740:SF2">
    <property type="entry name" value="LEUCINE--TRNA LIGASE, MITOCHONDRIAL"/>
    <property type="match status" value="1"/>
</dbReference>
<dbReference type="PANTHER" id="PTHR43740">
    <property type="entry name" value="LEUCYL-TRNA SYNTHETASE"/>
    <property type="match status" value="1"/>
</dbReference>
<dbReference type="Pfam" id="PF08264">
    <property type="entry name" value="Anticodon_1"/>
    <property type="match status" value="1"/>
</dbReference>
<dbReference type="Pfam" id="PF00133">
    <property type="entry name" value="tRNA-synt_1"/>
    <property type="match status" value="2"/>
</dbReference>
<dbReference type="Pfam" id="PF13603">
    <property type="entry name" value="tRNA-synt_1_2"/>
    <property type="match status" value="1"/>
</dbReference>
<dbReference type="Pfam" id="PF09334">
    <property type="entry name" value="tRNA-synt_1g"/>
    <property type="match status" value="1"/>
</dbReference>
<dbReference type="PRINTS" id="PR00985">
    <property type="entry name" value="TRNASYNTHLEU"/>
</dbReference>
<dbReference type="SUPFAM" id="SSF47323">
    <property type="entry name" value="Anticodon-binding domain of a subclass of class I aminoacyl-tRNA synthetases"/>
    <property type="match status" value="1"/>
</dbReference>
<dbReference type="SUPFAM" id="SSF52374">
    <property type="entry name" value="Nucleotidylyl transferase"/>
    <property type="match status" value="1"/>
</dbReference>
<dbReference type="SUPFAM" id="SSF50677">
    <property type="entry name" value="ValRS/IleRS/LeuRS editing domain"/>
    <property type="match status" value="1"/>
</dbReference>
<dbReference type="PROSITE" id="PS00178">
    <property type="entry name" value="AA_TRNA_LIGASE_I"/>
    <property type="match status" value="1"/>
</dbReference>
<protein>
    <recommendedName>
        <fullName evidence="1">Leucine--tRNA ligase</fullName>
        <ecNumber evidence="1">6.1.1.4</ecNumber>
    </recommendedName>
    <alternativeName>
        <fullName evidence="1">Leucyl-tRNA synthetase</fullName>
        <shortName evidence="1">LeuRS</shortName>
    </alternativeName>
</protein>
<reference key="1">
    <citation type="journal article" date="1987" name="Nucleic Acids Res.">
        <title>Molecular cloning and nucleotide sequence of the gene for Escherichia coli leucyl-tRNA synthetase.</title>
        <authorList>
            <person name="Haertlein M."/>
            <person name="Madern D."/>
        </authorList>
    </citation>
    <scope>NUCLEOTIDE SEQUENCE [GENOMIC DNA]</scope>
</reference>
<reference key="2">
    <citation type="journal article" date="1996" name="DNA Res.">
        <title>A 718-kb DNA sequence of the Escherichia coli K-12 genome corresponding to the 12.7-28.0 min region on the linkage map.</title>
        <authorList>
            <person name="Oshima T."/>
            <person name="Aiba H."/>
            <person name="Baba T."/>
            <person name="Fujita K."/>
            <person name="Hayashi K."/>
            <person name="Honjo A."/>
            <person name="Ikemoto K."/>
            <person name="Inada T."/>
            <person name="Itoh T."/>
            <person name="Kajihara M."/>
            <person name="Kanai K."/>
            <person name="Kashimoto K."/>
            <person name="Kimura S."/>
            <person name="Kitagawa M."/>
            <person name="Makino K."/>
            <person name="Masuda S."/>
            <person name="Miki T."/>
            <person name="Mizobuchi K."/>
            <person name="Mori H."/>
            <person name="Motomura K."/>
            <person name="Nakamura Y."/>
            <person name="Nashimoto H."/>
            <person name="Nishio Y."/>
            <person name="Saito N."/>
            <person name="Sampei G."/>
            <person name="Seki Y."/>
            <person name="Tagami H."/>
            <person name="Takemoto K."/>
            <person name="Wada C."/>
            <person name="Yamamoto Y."/>
            <person name="Yano M."/>
            <person name="Horiuchi T."/>
        </authorList>
    </citation>
    <scope>NUCLEOTIDE SEQUENCE [LARGE SCALE GENOMIC DNA]</scope>
    <source>
        <strain>K12 / W3110 / ATCC 27325 / DSM 5911</strain>
    </source>
</reference>
<reference key="3">
    <citation type="submission" date="1997-01" db="EMBL/GenBank/DDBJ databases">
        <title>Sequence of minutes 4-25 of Escherichia coli.</title>
        <authorList>
            <person name="Chung E."/>
            <person name="Allen E."/>
            <person name="Araujo R."/>
            <person name="Aparicio A.M."/>
            <person name="Davis K."/>
            <person name="Duncan M."/>
            <person name="Federspiel N."/>
            <person name="Hyman R."/>
            <person name="Kalman S."/>
            <person name="Komp C."/>
            <person name="Kurdi O."/>
            <person name="Lew H."/>
            <person name="Lin D."/>
            <person name="Namath A."/>
            <person name="Oefner P."/>
            <person name="Roberts D."/>
            <person name="Schramm S."/>
            <person name="Davis R.W."/>
        </authorList>
    </citation>
    <scope>NUCLEOTIDE SEQUENCE [LARGE SCALE GENOMIC DNA]</scope>
    <source>
        <strain>K12 / MG1655 / ATCC 47076</strain>
    </source>
</reference>
<reference key="4">
    <citation type="journal article" date="1997" name="Science">
        <title>The complete genome sequence of Escherichia coli K-12.</title>
        <authorList>
            <person name="Blattner F.R."/>
            <person name="Plunkett G. III"/>
            <person name="Bloch C.A."/>
            <person name="Perna N.T."/>
            <person name="Burland V."/>
            <person name="Riley M."/>
            <person name="Collado-Vides J."/>
            <person name="Glasner J.D."/>
            <person name="Rode C.K."/>
            <person name="Mayhew G.F."/>
            <person name="Gregor J."/>
            <person name="Davis N.W."/>
            <person name="Kirkpatrick H.A."/>
            <person name="Goeden M.A."/>
            <person name="Rose D.J."/>
            <person name="Mau B."/>
            <person name="Shao Y."/>
        </authorList>
    </citation>
    <scope>NUCLEOTIDE SEQUENCE [LARGE SCALE GENOMIC DNA]</scope>
    <source>
        <strain>K12 / MG1655 / ATCC 47076</strain>
    </source>
</reference>
<reference key="5">
    <citation type="journal article" date="2006" name="Mol. Syst. Biol.">
        <title>Highly accurate genome sequences of Escherichia coli K-12 strains MG1655 and W3110.</title>
        <authorList>
            <person name="Hayashi K."/>
            <person name="Morooka N."/>
            <person name="Yamamoto Y."/>
            <person name="Fujita K."/>
            <person name="Isono K."/>
            <person name="Choi S."/>
            <person name="Ohtsubo E."/>
            <person name="Baba T."/>
            <person name="Wanner B.L."/>
            <person name="Mori H."/>
            <person name="Horiuchi T."/>
        </authorList>
    </citation>
    <scope>NUCLEOTIDE SEQUENCE [LARGE SCALE GENOMIC DNA]</scope>
    <source>
        <strain>K12 / W3110 / ATCC 27325 / DSM 5911</strain>
    </source>
</reference>
<reference key="6">
    <citation type="journal article" date="1997" name="Electrophoresis">
        <title>Escherichia coli proteome analysis using the gene-protein database.</title>
        <authorList>
            <person name="VanBogelen R.A."/>
            <person name="Abshire K.Z."/>
            <person name="Moldover B."/>
            <person name="Olson E.R."/>
            <person name="Neidhardt F.C."/>
        </authorList>
    </citation>
    <scope>IDENTIFICATION BY 2D-GEL</scope>
</reference>
<comment type="catalytic activity">
    <reaction evidence="1">
        <text>tRNA(Leu) + L-leucine + ATP = L-leucyl-tRNA(Leu) + AMP + diphosphate</text>
        <dbReference type="Rhea" id="RHEA:11688"/>
        <dbReference type="Rhea" id="RHEA-COMP:9613"/>
        <dbReference type="Rhea" id="RHEA-COMP:9622"/>
        <dbReference type="ChEBI" id="CHEBI:30616"/>
        <dbReference type="ChEBI" id="CHEBI:33019"/>
        <dbReference type="ChEBI" id="CHEBI:57427"/>
        <dbReference type="ChEBI" id="CHEBI:78442"/>
        <dbReference type="ChEBI" id="CHEBI:78494"/>
        <dbReference type="ChEBI" id="CHEBI:456215"/>
        <dbReference type="EC" id="6.1.1.4"/>
    </reaction>
</comment>
<comment type="subunit">
    <text>Monomer.</text>
</comment>
<comment type="interaction">
    <interactant intactId="EBI-553345">
        <id>P07813</id>
    </interactant>
    <interactant intactId="EBI-550887">
        <id>P33129</id>
        <label>htrE</label>
    </interactant>
    <organismsDiffer>false</organismsDiffer>
    <experiments>3</experiments>
</comment>
<comment type="interaction">
    <interactant intactId="EBI-553345">
        <id>P07813</id>
    </interactant>
    <interactant intactId="EBI-553496">
        <id>P15042</id>
        <label>ligA</label>
    </interactant>
    <organismsDiffer>false</organismsDiffer>
    <experiments>3</experiments>
</comment>
<comment type="subcellular location">
    <subcellularLocation>
        <location>Cytoplasm</location>
    </subcellularLocation>
</comment>
<comment type="similarity">
    <text evidence="1">Belongs to the class-I aminoacyl-tRNA synthetase family.</text>
</comment>
<comment type="sequence caution" evidence="2">
    <conflict type="erroneous initiation">
        <sequence resource="EMBL-CDS" id="AAB40843"/>
    </conflict>
</comment>